<reference key="1">
    <citation type="submission" date="2007-09" db="EMBL/GenBank/DDBJ databases">
        <title>Complete genome sequence of Rickettsia akari.</title>
        <authorList>
            <person name="Madan A."/>
            <person name="Fahey J."/>
            <person name="Helton E."/>
            <person name="Ketteman M."/>
            <person name="Madan A."/>
            <person name="Rodrigues S."/>
            <person name="Sanchez A."/>
            <person name="Whiting M."/>
            <person name="Dasch G."/>
            <person name="Eremeeva M."/>
        </authorList>
    </citation>
    <scope>NUCLEOTIDE SEQUENCE [LARGE SCALE GENOMIC DNA]</scope>
    <source>
        <strain>Hartford</strain>
    </source>
</reference>
<dbReference type="EMBL" id="CP000847">
    <property type="protein sequence ID" value="ABV75242.1"/>
    <property type="molecule type" value="Genomic_DNA"/>
</dbReference>
<dbReference type="RefSeq" id="WP_012149872.1">
    <property type="nucleotide sequence ID" value="NC_009881.1"/>
</dbReference>
<dbReference type="SMR" id="A8GPB7"/>
<dbReference type="STRING" id="293614.A1C_04930"/>
<dbReference type="KEGG" id="rak:A1C_04930"/>
<dbReference type="eggNOG" id="COG0234">
    <property type="taxonomic scope" value="Bacteria"/>
</dbReference>
<dbReference type="HOGENOM" id="CLU_132825_1_0_5"/>
<dbReference type="Proteomes" id="UP000006830">
    <property type="component" value="Chromosome"/>
</dbReference>
<dbReference type="GO" id="GO:0005737">
    <property type="term" value="C:cytoplasm"/>
    <property type="evidence" value="ECO:0007669"/>
    <property type="project" value="UniProtKB-SubCell"/>
</dbReference>
<dbReference type="GO" id="GO:0005524">
    <property type="term" value="F:ATP binding"/>
    <property type="evidence" value="ECO:0007669"/>
    <property type="project" value="InterPro"/>
</dbReference>
<dbReference type="GO" id="GO:0046872">
    <property type="term" value="F:metal ion binding"/>
    <property type="evidence" value="ECO:0007669"/>
    <property type="project" value="TreeGrafter"/>
</dbReference>
<dbReference type="GO" id="GO:0044183">
    <property type="term" value="F:protein folding chaperone"/>
    <property type="evidence" value="ECO:0007669"/>
    <property type="project" value="InterPro"/>
</dbReference>
<dbReference type="GO" id="GO:0051087">
    <property type="term" value="F:protein-folding chaperone binding"/>
    <property type="evidence" value="ECO:0007669"/>
    <property type="project" value="TreeGrafter"/>
</dbReference>
<dbReference type="GO" id="GO:0051082">
    <property type="term" value="F:unfolded protein binding"/>
    <property type="evidence" value="ECO:0007669"/>
    <property type="project" value="TreeGrafter"/>
</dbReference>
<dbReference type="GO" id="GO:0051085">
    <property type="term" value="P:chaperone cofactor-dependent protein refolding"/>
    <property type="evidence" value="ECO:0007669"/>
    <property type="project" value="TreeGrafter"/>
</dbReference>
<dbReference type="CDD" id="cd00320">
    <property type="entry name" value="cpn10"/>
    <property type="match status" value="1"/>
</dbReference>
<dbReference type="FunFam" id="2.30.33.40:FF:000001">
    <property type="entry name" value="10 kDa chaperonin"/>
    <property type="match status" value="1"/>
</dbReference>
<dbReference type="Gene3D" id="2.30.33.40">
    <property type="entry name" value="GroES chaperonin"/>
    <property type="match status" value="1"/>
</dbReference>
<dbReference type="HAMAP" id="MF_00580">
    <property type="entry name" value="CH10"/>
    <property type="match status" value="1"/>
</dbReference>
<dbReference type="InterPro" id="IPR020818">
    <property type="entry name" value="Chaperonin_GroES"/>
</dbReference>
<dbReference type="InterPro" id="IPR037124">
    <property type="entry name" value="Chaperonin_GroES_sf"/>
</dbReference>
<dbReference type="InterPro" id="IPR018369">
    <property type="entry name" value="Chaprnonin_Cpn10_CS"/>
</dbReference>
<dbReference type="InterPro" id="IPR011032">
    <property type="entry name" value="GroES-like_sf"/>
</dbReference>
<dbReference type="NCBIfam" id="NF001527">
    <property type="entry name" value="PRK00364.1-2"/>
    <property type="match status" value="1"/>
</dbReference>
<dbReference type="NCBIfam" id="NF001529">
    <property type="entry name" value="PRK00364.1-5"/>
    <property type="match status" value="1"/>
</dbReference>
<dbReference type="NCBIfam" id="NF001531">
    <property type="entry name" value="PRK00364.2-2"/>
    <property type="match status" value="1"/>
</dbReference>
<dbReference type="NCBIfam" id="NF001533">
    <property type="entry name" value="PRK00364.2-4"/>
    <property type="match status" value="1"/>
</dbReference>
<dbReference type="PANTHER" id="PTHR10772">
    <property type="entry name" value="10 KDA HEAT SHOCK PROTEIN"/>
    <property type="match status" value="1"/>
</dbReference>
<dbReference type="PANTHER" id="PTHR10772:SF63">
    <property type="entry name" value="20 KDA CHAPERONIN, CHLOROPLASTIC"/>
    <property type="match status" value="1"/>
</dbReference>
<dbReference type="Pfam" id="PF00166">
    <property type="entry name" value="Cpn10"/>
    <property type="match status" value="1"/>
</dbReference>
<dbReference type="PRINTS" id="PR00297">
    <property type="entry name" value="CHAPERONIN10"/>
</dbReference>
<dbReference type="SMART" id="SM00883">
    <property type="entry name" value="Cpn10"/>
    <property type="match status" value="1"/>
</dbReference>
<dbReference type="SUPFAM" id="SSF50129">
    <property type="entry name" value="GroES-like"/>
    <property type="match status" value="1"/>
</dbReference>
<dbReference type="PROSITE" id="PS00681">
    <property type="entry name" value="CHAPERONINS_CPN10"/>
    <property type="match status" value="1"/>
</dbReference>
<sequence length="95" mass="10530">MSFKPLHDRIAIKPIEHEEKTKGGIIIPDTAKEKPMQGEIVAVGNGVRNKKGEIHPLELKVGDKVLYGKWAGTEIEIKGEKLIVMKESDVFGIIN</sequence>
<feature type="chain" id="PRO_1000025352" description="Co-chaperonin GroES">
    <location>
        <begin position="1"/>
        <end position="95"/>
    </location>
</feature>
<gene>
    <name evidence="1" type="primary">groES</name>
    <name evidence="1" type="synonym">groS</name>
    <name type="ordered locus">A1C_04930</name>
</gene>
<organism>
    <name type="scientific">Rickettsia akari (strain Hartford)</name>
    <dbReference type="NCBI Taxonomy" id="293614"/>
    <lineage>
        <taxon>Bacteria</taxon>
        <taxon>Pseudomonadati</taxon>
        <taxon>Pseudomonadota</taxon>
        <taxon>Alphaproteobacteria</taxon>
        <taxon>Rickettsiales</taxon>
        <taxon>Rickettsiaceae</taxon>
        <taxon>Rickettsieae</taxon>
        <taxon>Rickettsia</taxon>
        <taxon>spotted fever group</taxon>
    </lineage>
</organism>
<keyword id="KW-0143">Chaperone</keyword>
<keyword id="KW-0963">Cytoplasm</keyword>
<evidence type="ECO:0000255" key="1">
    <source>
        <dbReference type="HAMAP-Rule" id="MF_00580"/>
    </source>
</evidence>
<accession>A8GPB7</accession>
<protein>
    <recommendedName>
        <fullName evidence="1">Co-chaperonin GroES</fullName>
    </recommendedName>
    <alternativeName>
        <fullName evidence="1">10 kDa chaperonin</fullName>
    </alternativeName>
    <alternativeName>
        <fullName evidence="1">Chaperonin-10</fullName>
        <shortName evidence="1">Cpn10</shortName>
    </alternativeName>
</protein>
<name>CH10_RICAH</name>
<comment type="function">
    <text evidence="1">Together with the chaperonin GroEL, plays an essential role in assisting protein folding. The GroEL-GroES system forms a nano-cage that allows encapsulation of the non-native substrate proteins and provides a physical environment optimized to promote and accelerate protein folding. GroES binds to the apical surface of the GroEL ring, thereby capping the opening of the GroEL channel.</text>
</comment>
<comment type="subunit">
    <text evidence="1">Heptamer of 7 subunits arranged in a ring. Interacts with the chaperonin GroEL.</text>
</comment>
<comment type="subcellular location">
    <subcellularLocation>
        <location evidence="1">Cytoplasm</location>
    </subcellularLocation>
</comment>
<comment type="similarity">
    <text evidence="1">Belongs to the GroES chaperonin family.</text>
</comment>
<proteinExistence type="inferred from homology"/>